<organism>
    <name type="scientific">Capsella bursa-pastoris</name>
    <name type="common">Shepherd's purse</name>
    <name type="synonym">Thlaspi bursa-pastoris</name>
    <dbReference type="NCBI Taxonomy" id="3719"/>
    <lineage>
        <taxon>Eukaryota</taxon>
        <taxon>Viridiplantae</taxon>
        <taxon>Streptophyta</taxon>
        <taxon>Embryophyta</taxon>
        <taxon>Tracheophyta</taxon>
        <taxon>Spermatophyta</taxon>
        <taxon>Magnoliopsida</taxon>
        <taxon>eudicotyledons</taxon>
        <taxon>Gunneridae</taxon>
        <taxon>Pentapetalae</taxon>
        <taxon>rosids</taxon>
        <taxon>malvids</taxon>
        <taxon>Brassicales</taxon>
        <taxon>Brassicaceae</taxon>
        <taxon>Camelineae</taxon>
        <taxon>Capsella</taxon>
    </lineage>
</organism>
<gene>
    <name evidence="1" type="primary">psbM</name>
</gene>
<protein>
    <recommendedName>
        <fullName evidence="1">Photosystem II reaction center protein M</fullName>
        <shortName evidence="1">PSII-M</shortName>
    </recommendedName>
</protein>
<proteinExistence type="inferred from homology"/>
<accession>A4QKI6</accession>
<name>PSBM_CAPBU</name>
<dbReference type="EMBL" id="AP009371">
    <property type="protein sequence ID" value="BAF50191.1"/>
    <property type="molecule type" value="Genomic_DNA"/>
</dbReference>
<dbReference type="RefSeq" id="YP_001123367.1">
    <property type="nucleotide sequence ID" value="NC_009270.1"/>
</dbReference>
<dbReference type="SMR" id="A4QKI6"/>
<dbReference type="GeneID" id="4961737"/>
<dbReference type="GO" id="GO:0009535">
    <property type="term" value="C:chloroplast thylakoid membrane"/>
    <property type="evidence" value="ECO:0007669"/>
    <property type="project" value="UniProtKB-SubCell"/>
</dbReference>
<dbReference type="GO" id="GO:0009523">
    <property type="term" value="C:photosystem II"/>
    <property type="evidence" value="ECO:0007669"/>
    <property type="project" value="UniProtKB-KW"/>
</dbReference>
<dbReference type="GO" id="GO:0019684">
    <property type="term" value="P:photosynthesis, light reaction"/>
    <property type="evidence" value="ECO:0007669"/>
    <property type="project" value="InterPro"/>
</dbReference>
<dbReference type="HAMAP" id="MF_00438">
    <property type="entry name" value="PSII_PsbM"/>
    <property type="match status" value="1"/>
</dbReference>
<dbReference type="InterPro" id="IPR007826">
    <property type="entry name" value="PSII_PsbM"/>
</dbReference>
<dbReference type="InterPro" id="IPR037269">
    <property type="entry name" value="PSII_PsbM_sf"/>
</dbReference>
<dbReference type="NCBIfam" id="TIGR03038">
    <property type="entry name" value="PS_II_psbM"/>
    <property type="match status" value="1"/>
</dbReference>
<dbReference type="PANTHER" id="PTHR35774">
    <property type="entry name" value="PHOTOSYSTEM II REACTION CENTER PROTEIN M"/>
    <property type="match status" value="1"/>
</dbReference>
<dbReference type="PANTHER" id="PTHR35774:SF1">
    <property type="entry name" value="PHOTOSYSTEM II REACTION CENTER PROTEIN M"/>
    <property type="match status" value="1"/>
</dbReference>
<dbReference type="Pfam" id="PF05151">
    <property type="entry name" value="PsbM"/>
    <property type="match status" value="1"/>
</dbReference>
<dbReference type="SUPFAM" id="SSF161033">
    <property type="entry name" value="Photosystem II reaction center protein M, PsbM"/>
    <property type="match status" value="1"/>
</dbReference>
<geneLocation type="chloroplast"/>
<comment type="function">
    <text evidence="1">One of the components of the core complex of photosystem II (PSII). PSII is a light-driven water:plastoquinone oxidoreductase that uses light energy to abstract electrons from H(2)O, generating O(2) and a proton gradient subsequently used for ATP formation. It consists of a core antenna complex that captures photons, and an electron transfer chain that converts photonic excitation into a charge separation. This subunit is found at the monomer-monomer interface.</text>
</comment>
<comment type="subunit">
    <text evidence="1">PSII is composed of 1 copy each of membrane proteins PsbA, PsbB, PsbC, PsbD, PsbE, PsbF, PsbH, PsbI, PsbJ, PsbK, PsbL, PsbM, PsbT, PsbX, PsbY, PsbZ, Psb30/Ycf12, at least 3 peripheral proteins of the oxygen-evolving complex and a large number of cofactors. It forms dimeric complexes.</text>
</comment>
<comment type="subcellular location">
    <subcellularLocation>
        <location evidence="1">Plastid</location>
        <location evidence="1">Chloroplast thylakoid membrane</location>
        <topology evidence="1">Single-pass membrane protein</topology>
    </subcellularLocation>
</comment>
<comment type="similarity">
    <text evidence="1">Belongs to the PsbM family.</text>
</comment>
<reference key="1">
    <citation type="submission" date="2007-03" db="EMBL/GenBank/DDBJ databases">
        <title>Sequencing analysis of Capsella bursa-pastoris JO22 chloroplast DNA.</title>
        <authorList>
            <person name="Hosouchi T."/>
            <person name="Tsuruoka H."/>
            <person name="Kotani H."/>
        </authorList>
    </citation>
    <scope>NUCLEOTIDE SEQUENCE [LARGE SCALE GENOMIC DNA]</scope>
</reference>
<feature type="chain" id="PRO_0000325722" description="Photosystem II reaction center protein M">
    <location>
        <begin position="1"/>
        <end position="34"/>
    </location>
</feature>
<feature type="transmembrane region" description="Helical" evidence="1">
    <location>
        <begin position="5"/>
        <end position="25"/>
    </location>
</feature>
<keyword id="KW-0150">Chloroplast</keyword>
<keyword id="KW-0472">Membrane</keyword>
<keyword id="KW-0602">Photosynthesis</keyword>
<keyword id="KW-0604">Photosystem II</keyword>
<keyword id="KW-0934">Plastid</keyword>
<keyword id="KW-0674">Reaction center</keyword>
<keyword id="KW-0793">Thylakoid</keyword>
<keyword id="KW-0812">Transmembrane</keyword>
<keyword id="KW-1133">Transmembrane helix</keyword>
<evidence type="ECO:0000255" key="1">
    <source>
        <dbReference type="HAMAP-Rule" id="MF_00438"/>
    </source>
</evidence>
<sequence length="34" mass="3783">MEVNILAFIATALFILVPTAFLLIIYVKTVSQND</sequence>